<keyword id="KW-0963">Cytoplasm</keyword>
<keyword id="KW-0206">Cytoskeleton</keyword>
<keyword id="KW-0342">GTP-binding</keyword>
<keyword id="KW-0460">Magnesium</keyword>
<keyword id="KW-0479">Metal-binding</keyword>
<keyword id="KW-0493">Microtubule</keyword>
<keyword id="KW-0547">Nucleotide-binding</keyword>
<keyword id="KW-1185">Reference proteome</keyword>
<accession>Q9ZRB0</accession>
<name>TBB3_WHEAT</name>
<dbReference type="EMBL" id="U76746">
    <property type="protein sequence ID" value="AAD10489.1"/>
    <property type="molecule type" value="mRNA"/>
</dbReference>
<dbReference type="SMR" id="Q9ZRB0"/>
<dbReference type="STRING" id="4565.Q9ZRB0"/>
<dbReference type="PaxDb" id="4565-Traes_6AS_FAFAAFD12.2"/>
<dbReference type="EnsemblPlants" id="TraesARI6A03G03241090.1">
    <property type="protein sequence ID" value="TraesARI6A03G03241090.1"/>
    <property type="gene ID" value="TraesARI6A03G03241090"/>
</dbReference>
<dbReference type="EnsemblPlants" id="TraesARI6D03G03650740.1">
    <property type="protein sequence ID" value="TraesARI6D03G03650740.1"/>
    <property type="gene ID" value="TraesARI6D03G03650740"/>
</dbReference>
<dbReference type="EnsemblPlants" id="TraesCS6D02G130500.2">
    <property type="protein sequence ID" value="TraesCS6D02G130500.2"/>
    <property type="gene ID" value="TraesCS6D02G130500"/>
</dbReference>
<dbReference type="EnsemblPlants" id="TraesCS6D03G0289100.2">
    <property type="protein sequence ID" value="TraesCS6D03G0289100.2.CDS"/>
    <property type="gene ID" value="TraesCS6D03G0289100"/>
</dbReference>
<dbReference type="EnsemblPlants" id="TraesJAG6A03G03280400.1">
    <property type="protein sequence ID" value="TraesJAG6A03G03280400.1"/>
    <property type="gene ID" value="TraesJAG6A03G03280400"/>
</dbReference>
<dbReference type="EnsemblPlants" id="TraesJAG6D03G03670260.1">
    <property type="protein sequence ID" value="TraesJAG6D03G03670260.1"/>
    <property type="gene ID" value="TraesJAG6D03G03670260"/>
</dbReference>
<dbReference type="EnsemblPlants" id="TraesJUL6A03G03311920.1">
    <property type="protein sequence ID" value="TraesJUL6A03G03311920.1"/>
    <property type="gene ID" value="TraesJUL6A03G03311920"/>
</dbReference>
<dbReference type="EnsemblPlants" id="TraesJUL6D03G03719840.1">
    <property type="protein sequence ID" value="TraesJUL6D03G03719840.1"/>
    <property type="gene ID" value="TraesJUL6D03G03719840"/>
</dbReference>
<dbReference type="EnsemblPlants" id="TraesKAR6A01G0077620.1">
    <property type="protein sequence ID" value="cds.TraesKAR6A01G0077620.1"/>
    <property type="gene ID" value="TraesKAR6A01G0077620"/>
</dbReference>
<dbReference type="EnsemblPlants" id="TraesLAC6D03G03637340.1">
    <property type="protein sequence ID" value="TraesLAC6D03G03637340.1"/>
    <property type="gene ID" value="TraesLAC6D03G03637340"/>
</dbReference>
<dbReference type="EnsemblPlants" id="TraesLDM6A03G03289040.1">
    <property type="protein sequence ID" value="TraesLDM6A03G03289040.1"/>
    <property type="gene ID" value="TraesLDM6A03G03289040"/>
</dbReference>
<dbReference type="EnsemblPlants" id="TraesLDM6D03G03690520.1">
    <property type="protein sequence ID" value="TraesLDM6D03G03690520.1"/>
    <property type="gene ID" value="TraesLDM6D03G03690520"/>
</dbReference>
<dbReference type="EnsemblPlants" id="TraesMAC6A03G03285010.1">
    <property type="protein sequence ID" value="TraesMAC6A03G03285010.1"/>
    <property type="gene ID" value="TraesMAC6A03G03285010"/>
</dbReference>
<dbReference type="EnsemblPlants" id="TraesMAC6D03G03685440.1">
    <property type="protein sequence ID" value="TraesMAC6D03G03685440.1"/>
    <property type="gene ID" value="TraesMAC6D03G03685440"/>
</dbReference>
<dbReference type="EnsemblPlants" id="TraesNOR6A03G03317210.1">
    <property type="protein sequence ID" value="TraesNOR6A03G03317210.1"/>
    <property type="gene ID" value="TraesNOR6A03G03317210"/>
</dbReference>
<dbReference type="EnsemblPlants" id="TraesNOR6D03G03727340.1">
    <property type="protein sequence ID" value="TraesNOR6D03G03727340.1"/>
    <property type="gene ID" value="TraesNOR6D03G03727340"/>
</dbReference>
<dbReference type="EnsemblPlants" id="TraesPARA_EIv1.0_1921070.1">
    <property type="protein sequence ID" value="TraesPARA_EIv1.0_1921070.1.CDS"/>
    <property type="gene ID" value="TraesPARA_EIv1.0_1921070"/>
</dbReference>
<dbReference type="EnsemblPlants" id="TraesPARA_EIv1.0_2189200.1">
    <property type="protein sequence ID" value="TraesPARA_EIv1.0_2189200.1.CDS"/>
    <property type="gene ID" value="TraesPARA_EIv1.0_2189200"/>
</dbReference>
<dbReference type="EnsemblPlants" id="TraesRN6D0100315900.2">
    <property type="protein sequence ID" value="TraesRN6D0100315900.2"/>
    <property type="gene ID" value="TraesRN6D0100315900"/>
</dbReference>
<dbReference type="EnsemblPlants" id="TraesSTA6A03G03276390.1">
    <property type="protein sequence ID" value="TraesSTA6A03G03276390.1"/>
    <property type="gene ID" value="TraesSTA6A03G03276390"/>
</dbReference>
<dbReference type="EnsemblPlants" id="TraesSTA6D03G03680930.1">
    <property type="protein sequence ID" value="TraesSTA6D03G03680930.1"/>
    <property type="gene ID" value="TraesSTA6D03G03680930"/>
</dbReference>
<dbReference type="EnsemblPlants" id="TraesSYM6A03G03226460.1">
    <property type="protein sequence ID" value="TraesSYM6A03G03226460.1"/>
    <property type="gene ID" value="TraesSYM6A03G03226460"/>
</dbReference>
<dbReference type="EnsemblPlants" id="TraesSYM6D03G03633990.1">
    <property type="protein sequence ID" value="TraesSYM6D03G03633990.1"/>
    <property type="gene ID" value="TraesSYM6D03G03633990"/>
</dbReference>
<dbReference type="Gramene" id="TraesARI6A03G03241090.1">
    <property type="protein sequence ID" value="TraesARI6A03G03241090.1"/>
    <property type="gene ID" value="TraesARI6A03G03241090"/>
</dbReference>
<dbReference type="Gramene" id="TraesARI6D03G03650740.1">
    <property type="protein sequence ID" value="TraesARI6D03G03650740.1"/>
    <property type="gene ID" value="TraesARI6D03G03650740"/>
</dbReference>
<dbReference type="Gramene" id="TraesCS6D02G130500.2">
    <property type="protein sequence ID" value="TraesCS6D02G130500.2"/>
    <property type="gene ID" value="TraesCS6D02G130500"/>
</dbReference>
<dbReference type="Gramene" id="TraesCS6D03G0289100.2">
    <property type="protein sequence ID" value="TraesCS6D03G0289100.2.CDS"/>
    <property type="gene ID" value="TraesCS6D03G0289100"/>
</dbReference>
<dbReference type="Gramene" id="TraesJAG6A03G03280400.1">
    <property type="protein sequence ID" value="TraesJAG6A03G03280400.1"/>
    <property type="gene ID" value="TraesJAG6A03G03280400"/>
</dbReference>
<dbReference type="Gramene" id="TraesJAG6D03G03670260.1">
    <property type="protein sequence ID" value="TraesJAG6D03G03670260.1"/>
    <property type="gene ID" value="TraesJAG6D03G03670260"/>
</dbReference>
<dbReference type="Gramene" id="TraesJUL6A03G03311920.1">
    <property type="protein sequence ID" value="TraesJUL6A03G03311920.1"/>
    <property type="gene ID" value="TraesJUL6A03G03311920"/>
</dbReference>
<dbReference type="Gramene" id="TraesJUL6D03G03719840.1">
    <property type="protein sequence ID" value="TraesJUL6D03G03719840.1"/>
    <property type="gene ID" value="TraesJUL6D03G03719840"/>
</dbReference>
<dbReference type="Gramene" id="TraesKAR6A01G0077620.1">
    <property type="protein sequence ID" value="cds.TraesKAR6A01G0077620.1"/>
    <property type="gene ID" value="TraesKAR6A01G0077620"/>
</dbReference>
<dbReference type="Gramene" id="TraesLAC6D03G03637340.1">
    <property type="protein sequence ID" value="TraesLAC6D03G03637340.1"/>
    <property type="gene ID" value="TraesLAC6D03G03637340"/>
</dbReference>
<dbReference type="Gramene" id="TraesLDM6A03G03289040.1">
    <property type="protein sequence ID" value="TraesLDM6A03G03289040.1"/>
    <property type="gene ID" value="TraesLDM6A03G03289040"/>
</dbReference>
<dbReference type="Gramene" id="TraesLDM6D03G03690520.1">
    <property type="protein sequence ID" value="TraesLDM6D03G03690520.1"/>
    <property type="gene ID" value="TraesLDM6D03G03690520"/>
</dbReference>
<dbReference type="Gramene" id="TraesMAC6A03G03285010.1">
    <property type="protein sequence ID" value="TraesMAC6A03G03285010.1"/>
    <property type="gene ID" value="TraesMAC6A03G03285010"/>
</dbReference>
<dbReference type="Gramene" id="TraesMAC6D03G03685440.1">
    <property type="protein sequence ID" value="TraesMAC6D03G03685440.1"/>
    <property type="gene ID" value="TraesMAC6D03G03685440"/>
</dbReference>
<dbReference type="Gramene" id="TraesNOR6A03G03317210.1">
    <property type="protein sequence ID" value="TraesNOR6A03G03317210.1"/>
    <property type="gene ID" value="TraesNOR6A03G03317210"/>
</dbReference>
<dbReference type="Gramene" id="TraesNOR6D03G03727340.1">
    <property type="protein sequence ID" value="TraesNOR6D03G03727340.1"/>
    <property type="gene ID" value="TraesNOR6D03G03727340"/>
</dbReference>
<dbReference type="Gramene" id="TraesPARA_EIv1.0_1921070.1">
    <property type="protein sequence ID" value="TraesPARA_EIv1.0_1921070.1.CDS"/>
    <property type="gene ID" value="TraesPARA_EIv1.0_1921070"/>
</dbReference>
<dbReference type="Gramene" id="TraesPARA_EIv1.0_2189200.1">
    <property type="protein sequence ID" value="TraesPARA_EIv1.0_2189200.1.CDS"/>
    <property type="gene ID" value="TraesPARA_EIv1.0_2189200"/>
</dbReference>
<dbReference type="Gramene" id="TraesRN6D0100315900.2">
    <property type="protein sequence ID" value="TraesRN6D0100315900.2"/>
    <property type="gene ID" value="TraesRN6D0100315900"/>
</dbReference>
<dbReference type="Gramene" id="TraesSTA6A03G03276390.1">
    <property type="protein sequence ID" value="TraesSTA6A03G03276390.1"/>
    <property type="gene ID" value="TraesSTA6A03G03276390"/>
</dbReference>
<dbReference type="Gramene" id="TraesSTA6D03G03680930.1">
    <property type="protein sequence ID" value="TraesSTA6D03G03680930.1"/>
    <property type="gene ID" value="TraesSTA6D03G03680930"/>
</dbReference>
<dbReference type="Gramene" id="TraesSYM6A03G03226460.1">
    <property type="protein sequence ID" value="TraesSYM6A03G03226460.1"/>
    <property type="gene ID" value="TraesSYM6A03G03226460"/>
</dbReference>
<dbReference type="Gramene" id="TraesSYM6D03G03633990.1">
    <property type="protein sequence ID" value="TraesSYM6D03G03633990.1"/>
    <property type="gene ID" value="TraesSYM6D03G03633990"/>
</dbReference>
<dbReference type="eggNOG" id="KOG1375">
    <property type="taxonomic scope" value="Eukaryota"/>
</dbReference>
<dbReference type="HOGENOM" id="CLU_015718_1_1_1"/>
<dbReference type="OMA" id="DYISSCV"/>
<dbReference type="OrthoDB" id="732292at2759"/>
<dbReference type="Proteomes" id="UP000019116">
    <property type="component" value="Chromosome 6D"/>
</dbReference>
<dbReference type="ExpressionAtlas" id="Q9ZRB0">
    <property type="expression patterns" value="baseline and differential"/>
</dbReference>
<dbReference type="GO" id="GO:0005737">
    <property type="term" value="C:cytoplasm"/>
    <property type="evidence" value="ECO:0000318"/>
    <property type="project" value="GO_Central"/>
</dbReference>
<dbReference type="GO" id="GO:0005874">
    <property type="term" value="C:microtubule"/>
    <property type="evidence" value="ECO:0000318"/>
    <property type="project" value="GO_Central"/>
</dbReference>
<dbReference type="GO" id="GO:0005525">
    <property type="term" value="F:GTP binding"/>
    <property type="evidence" value="ECO:0000318"/>
    <property type="project" value="GO_Central"/>
</dbReference>
<dbReference type="GO" id="GO:0003924">
    <property type="term" value="F:GTPase activity"/>
    <property type="evidence" value="ECO:0007669"/>
    <property type="project" value="InterPro"/>
</dbReference>
<dbReference type="GO" id="GO:0046872">
    <property type="term" value="F:metal ion binding"/>
    <property type="evidence" value="ECO:0007669"/>
    <property type="project" value="UniProtKB-KW"/>
</dbReference>
<dbReference type="GO" id="GO:0005200">
    <property type="term" value="F:structural constituent of cytoskeleton"/>
    <property type="evidence" value="ECO:0000318"/>
    <property type="project" value="GO_Central"/>
</dbReference>
<dbReference type="GO" id="GO:0000226">
    <property type="term" value="P:microtubule cytoskeleton organization"/>
    <property type="evidence" value="ECO:0000318"/>
    <property type="project" value="GO_Central"/>
</dbReference>
<dbReference type="GO" id="GO:0000278">
    <property type="term" value="P:mitotic cell cycle"/>
    <property type="evidence" value="ECO:0000318"/>
    <property type="project" value="GO_Central"/>
</dbReference>
<dbReference type="CDD" id="cd02187">
    <property type="entry name" value="beta_tubulin"/>
    <property type="match status" value="1"/>
</dbReference>
<dbReference type="FunFam" id="1.10.287.600:FF:000002">
    <property type="entry name" value="Tubulin beta chain"/>
    <property type="match status" value="1"/>
</dbReference>
<dbReference type="FunFam" id="3.30.1330.20:FF:000002">
    <property type="entry name" value="Tubulin beta chain"/>
    <property type="match status" value="1"/>
</dbReference>
<dbReference type="FunFam" id="3.40.50.1440:FF:000005">
    <property type="entry name" value="Tubulin beta chain"/>
    <property type="match status" value="1"/>
</dbReference>
<dbReference type="Gene3D" id="1.10.287.600">
    <property type="entry name" value="Helix hairpin bin"/>
    <property type="match status" value="1"/>
</dbReference>
<dbReference type="Gene3D" id="3.30.1330.20">
    <property type="entry name" value="Tubulin/FtsZ, C-terminal domain"/>
    <property type="match status" value="1"/>
</dbReference>
<dbReference type="Gene3D" id="3.40.50.1440">
    <property type="entry name" value="Tubulin/FtsZ, GTPase domain"/>
    <property type="match status" value="1"/>
</dbReference>
<dbReference type="InterPro" id="IPR013838">
    <property type="entry name" value="Beta-tubulin_BS"/>
</dbReference>
<dbReference type="InterPro" id="IPR002453">
    <property type="entry name" value="Beta_tubulin"/>
</dbReference>
<dbReference type="InterPro" id="IPR008280">
    <property type="entry name" value="Tub_FtsZ_C"/>
</dbReference>
<dbReference type="InterPro" id="IPR000217">
    <property type="entry name" value="Tubulin"/>
</dbReference>
<dbReference type="InterPro" id="IPR037103">
    <property type="entry name" value="Tubulin/FtsZ-like_C"/>
</dbReference>
<dbReference type="InterPro" id="IPR018316">
    <property type="entry name" value="Tubulin/FtsZ_2-layer-sand-dom"/>
</dbReference>
<dbReference type="InterPro" id="IPR036525">
    <property type="entry name" value="Tubulin/FtsZ_GTPase_sf"/>
</dbReference>
<dbReference type="InterPro" id="IPR023123">
    <property type="entry name" value="Tubulin_C"/>
</dbReference>
<dbReference type="InterPro" id="IPR017975">
    <property type="entry name" value="Tubulin_CS"/>
</dbReference>
<dbReference type="InterPro" id="IPR003008">
    <property type="entry name" value="Tubulin_FtsZ_GTPase"/>
</dbReference>
<dbReference type="PANTHER" id="PTHR11588">
    <property type="entry name" value="TUBULIN"/>
    <property type="match status" value="1"/>
</dbReference>
<dbReference type="Pfam" id="PF00091">
    <property type="entry name" value="Tubulin"/>
    <property type="match status" value="1"/>
</dbReference>
<dbReference type="Pfam" id="PF03953">
    <property type="entry name" value="Tubulin_C"/>
    <property type="match status" value="1"/>
</dbReference>
<dbReference type="PRINTS" id="PR01163">
    <property type="entry name" value="BETATUBULIN"/>
</dbReference>
<dbReference type="PRINTS" id="PR01161">
    <property type="entry name" value="TUBULIN"/>
</dbReference>
<dbReference type="SMART" id="SM00864">
    <property type="entry name" value="Tubulin"/>
    <property type="match status" value="1"/>
</dbReference>
<dbReference type="SMART" id="SM00865">
    <property type="entry name" value="Tubulin_C"/>
    <property type="match status" value="1"/>
</dbReference>
<dbReference type="SUPFAM" id="SSF55307">
    <property type="entry name" value="Tubulin C-terminal domain-like"/>
    <property type="match status" value="1"/>
</dbReference>
<dbReference type="SUPFAM" id="SSF52490">
    <property type="entry name" value="Tubulin nucleotide-binding domain-like"/>
    <property type="match status" value="1"/>
</dbReference>
<dbReference type="PROSITE" id="PS00227">
    <property type="entry name" value="TUBULIN"/>
    <property type="match status" value="1"/>
</dbReference>
<dbReference type="PROSITE" id="PS00228">
    <property type="entry name" value="TUBULIN_B_AUTOREG"/>
    <property type="match status" value="1"/>
</dbReference>
<sequence>MREILHIQGGQCGNQIGAKFWEVICDEHGIDQTGKYAGDSDLQLERINVYYNEASGGRFVPRAVLMDLEPGTMDSLRSGPYGQIFRPDNFVFGQSGAGNNWAKGHYTEGAELIDSVLDVVRKEAENCDCLQGFQVCHSLGGGTGSGMGTLLISKIREEYPDRMMLTFSVFPSPKVSDTVVEPYNATLSVHQLVENADECMVLDNEALYDICFRTLKLATPTFGDLNHLISATMSGVTCCLRFPGQLNSDLRKLAVNLIPFPRLHFFMVGFAPLTSRGSQQYRALTVPELTQQMWDSKNMMCAADPRHGRYLTASAMFRGKMSTKEVDEQMLNVQNKNSSYFVEWIPNNVKSSVCDIPPTGLSMSSTFVGNSTSIQEMFRRVSEQFTAMFRRKAFLHWYTGEGMDEMEFTEAESNMNDLVAEYQQYQDATADEEEEYDEEEEEEAA</sequence>
<gene>
    <name type="primary">TUBB3</name>
</gene>
<evidence type="ECO:0000250" key="1">
    <source>
        <dbReference type="UniProtKB" id="P68363"/>
    </source>
</evidence>
<evidence type="ECO:0000250" key="2">
    <source>
        <dbReference type="UniProtKB" id="Q13509"/>
    </source>
</evidence>
<evidence type="ECO:0000256" key="3">
    <source>
        <dbReference type="SAM" id="MobiDB-lite"/>
    </source>
</evidence>
<evidence type="ECO:0000305" key="4"/>
<comment type="function">
    <text>Tubulin is the major constituent of microtubules, a cylinder consisting of laterally associated linear protofilaments composed of alpha- and beta-tubulin heterodimers. Microtubules grow by the addition of GTP-tubulin dimers to the microtubule end, where a stabilizing cap forms. Below the cap, tubulin dimers are in GDP-bound state, owing to GTPase activity of alpha-tubulin.</text>
</comment>
<comment type="cofactor">
    <cofactor evidence="1">
        <name>Mg(2+)</name>
        <dbReference type="ChEBI" id="CHEBI:18420"/>
    </cofactor>
</comment>
<comment type="subunit">
    <text>Dimer of alpha and beta chains. A typical microtubule is a hollow water-filled tube with an outer diameter of 25 nm and an inner diameter of 15 nM. Alpha-beta heterodimers associate head-to-tail to form protofilaments running lengthwise along the microtubule wall with the beta-tubulin subunit facing the microtubule plus end conferring a structural polarity. Microtubules usually have 13 protofilaments but different protofilament numbers can be found in some organisms and specialized cells.</text>
</comment>
<comment type="subcellular location">
    <subcellularLocation>
        <location>Cytoplasm</location>
        <location>Cytoskeleton</location>
    </subcellularLocation>
</comment>
<comment type="similarity">
    <text evidence="4">Belongs to the tubulin family.</text>
</comment>
<reference key="1">
    <citation type="submission" date="1996-10" db="EMBL/GenBank/DDBJ databases">
        <title>Tubb3, a beta-tubulin cDNA from common wheat.</title>
        <authorList>
            <person name="Segal G."/>
            <person name="Feldman M."/>
        </authorList>
    </citation>
    <scope>NUCLEOTIDE SEQUENCE [MRNA]</scope>
    <source>
        <strain>cv. Chinese Spring</strain>
        <tissue>Root tip</tissue>
    </source>
</reference>
<organism>
    <name type="scientific">Triticum aestivum</name>
    <name type="common">Wheat</name>
    <dbReference type="NCBI Taxonomy" id="4565"/>
    <lineage>
        <taxon>Eukaryota</taxon>
        <taxon>Viridiplantae</taxon>
        <taxon>Streptophyta</taxon>
        <taxon>Embryophyta</taxon>
        <taxon>Tracheophyta</taxon>
        <taxon>Spermatophyta</taxon>
        <taxon>Magnoliopsida</taxon>
        <taxon>Liliopsida</taxon>
        <taxon>Poales</taxon>
        <taxon>Poaceae</taxon>
        <taxon>BOP clade</taxon>
        <taxon>Pooideae</taxon>
        <taxon>Triticodae</taxon>
        <taxon>Triticeae</taxon>
        <taxon>Triticinae</taxon>
        <taxon>Triticum</taxon>
    </lineage>
</organism>
<proteinExistence type="evidence at transcript level"/>
<protein>
    <recommendedName>
        <fullName>Tubulin beta-3 chain</fullName>
    </recommendedName>
    <alternativeName>
        <fullName>Beta-3-tubulin</fullName>
    </alternativeName>
</protein>
<feature type="chain" id="PRO_0000048387" description="Tubulin beta-3 chain">
    <location>
        <begin position="1"/>
        <end position="445"/>
    </location>
</feature>
<feature type="region of interest" description="Disordered" evidence="3">
    <location>
        <begin position="421"/>
        <end position="445"/>
    </location>
</feature>
<feature type="compositionally biased region" description="Acidic residues" evidence="3">
    <location>
        <begin position="429"/>
        <end position="445"/>
    </location>
</feature>
<feature type="binding site" evidence="2">
    <location>
        <position position="11"/>
    </location>
    <ligand>
        <name>GTP</name>
        <dbReference type="ChEBI" id="CHEBI:37565"/>
    </ligand>
</feature>
<feature type="binding site" evidence="1">
    <location>
        <position position="69"/>
    </location>
    <ligand>
        <name>GTP</name>
        <dbReference type="ChEBI" id="CHEBI:37565"/>
    </ligand>
</feature>
<feature type="binding site" evidence="1">
    <location>
        <position position="69"/>
    </location>
    <ligand>
        <name>Mg(2+)</name>
        <dbReference type="ChEBI" id="CHEBI:18420"/>
    </ligand>
</feature>
<feature type="binding site" evidence="2">
    <location>
        <position position="138"/>
    </location>
    <ligand>
        <name>GTP</name>
        <dbReference type="ChEBI" id="CHEBI:37565"/>
    </ligand>
</feature>
<feature type="binding site" evidence="2">
    <location>
        <position position="142"/>
    </location>
    <ligand>
        <name>GTP</name>
        <dbReference type="ChEBI" id="CHEBI:37565"/>
    </ligand>
</feature>
<feature type="binding site" evidence="2">
    <location>
        <position position="143"/>
    </location>
    <ligand>
        <name>GTP</name>
        <dbReference type="ChEBI" id="CHEBI:37565"/>
    </ligand>
</feature>
<feature type="binding site" evidence="2">
    <location>
        <position position="144"/>
    </location>
    <ligand>
        <name>GTP</name>
        <dbReference type="ChEBI" id="CHEBI:37565"/>
    </ligand>
</feature>
<feature type="binding site" evidence="2">
    <location>
        <position position="204"/>
    </location>
    <ligand>
        <name>GTP</name>
        <dbReference type="ChEBI" id="CHEBI:37565"/>
    </ligand>
</feature>
<feature type="binding site" evidence="2">
    <location>
        <position position="226"/>
    </location>
    <ligand>
        <name>GTP</name>
        <dbReference type="ChEBI" id="CHEBI:37565"/>
    </ligand>
</feature>